<name>COTO_BACSU</name>
<organism>
    <name type="scientific">Bacillus subtilis (strain 168)</name>
    <dbReference type="NCBI Taxonomy" id="224308"/>
    <lineage>
        <taxon>Bacteria</taxon>
        <taxon>Bacillati</taxon>
        <taxon>Bacillota</taxon>
        <taxon>Bacilli</taxon>
        <taxon>Bacillales</taxon>
        <taxon>Bacillaceae</taxon>
        <taxon>Bacillus</taxon>
    </lineage>
</organism>
<keyword id="KW-1185">Reference proteome</keyword>
<keyword id="KW-0749">Sporulation</keyword>
<reference key="1">
    <citation type="journal article" date="1997" name="Nature">
        <title>The complete genome sequence of the Gram-positive bacterium Bacillus subtilis.</title>
        <authorList>
            <person name="Kunst F."/>
            <person name="Ogasawara N."/>
            <person name="Moszer I."/>
            <person name="Albertini A.M."/>
            <person name="Alloni G."/>
            <person name="Azevedo V."/>
            <person name="Bertero M.G."/>
            <person name="Bessieres P."/>
            <person name="Bolotin A."/>
            <person name="Borchert S."/>
            <person name="Borriss R."/>
            <person name="Boursier L."/>
            <person name="Brans A."/>
            <person name="Braun M."/>
            <person name="Brignell S.C."/>
            <person name="Bron S."/>
            <person name="Brouillet S."/>
            <person name="Bruschi C.V."/>
            <person name="Caldwell B."/>
            <person name="Capuano V."/>
            <person name="Carter N.M."/>
            <person name="Choi S.-K."/>
            <person name="Codani J.-J."/>
            <person name="Connerton I.F."/>
            <person name="Cummings N.J."/>
            <person name="Daniel R.A."/>
            <person name="Denizot F."/>
            <person name="Devine K.M."/>
            <person name="Duesterhoeft A."/>
            <person name="Ehrlich S.D."/>
            <person name="Emmerson P.T."/>
            <person name="Entian K.-D."/>
            <person name="Errington J."/>
            <person name="Fabret C."/>
            <person name="Ferrari E."/>
            <person name="Foulger D."/>
            <person name="Fritz C."/>
            <person name="Fujita M."/>
            <person name="Fujita Y."/>
            <person name="Fuma S."/>
            <person name="Galizzi A."/>
            <person name="Galleron N."/>
            <person name="Ghim S.-Y."/>
            <person name="Glaser P."/>
            <person name="Goffeau A."/>
            <person name="Golightly E.J."/>
            <person name="Grandi G."/>
            <person name="Guiseppi G."/>
            <person name="Guy B.J."/>
            <person name="Haga K."/>
            <person name="Haiech J."/>
            <person name="Harwood C.R."/>
            <person name="Henaut A."/>
            <person name="Hilbert H."/>
            <person name="Holsappel S."/>
            <person name="Hosono S."/>
            <person name="Hullo M.-F."/>
            <person name="Itaya M."/>
            <person name="Jones L.-M."/>
            <person name="Joris B."/>
            <person name="Karamata D."/>
            <person name="Kasahara Y."/>
            <person name="Klaerr-Blanchard M."/>
            <person name="Klein C."/>
            <person name="Kobayashi Y."/>
            <person name="Koetter P."/>
            <person name="Koningstein G."/>
            <person name="Krogh S."/>
            <person name="Kumano M."/>
            <person name="Kurita K."/>
            <person name="Lapidus A."/>
            <person name="Lardinois S."/>
            <person name="Lauber J."/>
            <person name="Lazarevic V."/>
            <person name="Lee S.-M."/>
            <person name="Levine A."/>
            <person name="Liu H."/>
            <person name="Masuda S."/>
            <person name="Mauel C."/>
            <person name="Medigue C."/>
            <person name="Medina N."/>
            <person name="Mellado R.P."/>
            <person name="Mizuno M."/>
            <person name="Moestl D."/>
            <person name="Nakai S."/>
            <person name="Noback M."/>
            <person name="Noone D."/>
            <person name="O'Reilly M."/>
            <person name="Ogawa K."/>
            <person name="Ogiwara A."/>
            <person name="Oudega B."/>
            <person name="Park S.-H."/>
            <person name="Parro V."/>
            <person name="Pohl T.M."/>
            <person name="Portetelle D."/>
            <person name="Porwollik S."/>
            <person name="Prescott A.M."/>
            <person name="Presecan E."/>
            <person name="Pujic P."/>
            <person name="Purnelle B."/>
            <person name="Rapoport G."/>
            <person name="Rey M."/>
            <person name="Reynolds S."/>
            <person name="Rieger M."/>
            <person name="Rivolta C."/>
            <person name="Rocha E."/>
            <person name="Roche B."/>
            <person name="Rose M."/>
            <person name="Sadaie Y."/>
            <person name="Sato T."/>
            <person name="Scanlan E."/>
            <person name="Schleich S."/>
            <person name="Schroeter R."/>
            <person name="Scoffone F."/>
            <person name="Sekiguchi J."/>
            <person name="Sekowska A."/>
            <person name="Seror S.J."/>
            <person name="Serror P."/>
            <person name="Shin B.-S."/>
            <person name="Soldo B."/>
            <person name="Sorokin A."/>
            <person name="Tacconi E."/>
            <person name="Takagi T."/>
            <person name="Takahashi H."/>
            <person name="Takemaru K."/>
            <person name="Takeuchi M."/>
            <person name="Tamakoshi A."/>
            <person name="Tanaka T."/>
            <person name="Terpstra P."/>
            <person name="Tognoni A."/>
            <person name="Tosato V."/>
            <person name="Uchiyama S."/>
            <person name="Vandenbol M."/>
            <person name="Vannier F."/>
            <person name="Vassarotti A."/>
            <person name="Viari A."/>
            <person name="Wambutt R."/>
            <person name="Wedler E."/>
            <person name="Wedler H."/>
            <person name="Weitzenegger T."/>
            <person name="Winters P."/>
            <person name="Wipat A."/>
            <person name="Yamamoto H."/>
            <person name="Yamane K."/>
            <person name="Yasumoto K."/>
            <person name="Yata K."/>
            <person name="Yoshida K."/>
            <person name="Yoshikawa H.-F."/>
            <person name="Zumstein E."/>
            <person name="Yoshikawa H."/>
            <person name="Danchin A."/>
        </authorList>
    </citation>
    <scope>NUCLEOTIDE SEQUENCE [LARGE SCALE GENOMIC DNA]</scope>
    <source>
        <strain>168</strain>
    </source>
</reference>
<reference key="2">
    <citation type="journal article" date="2005" name="J. Bacteriol.">
        <title>Characterization of the Bacillus subtilis spore morphogenetic coat protein CotO.</title>
        <authorList>
            <person name="McPherson D.C."/>
            <person name="Kim H."/>
            <person name="Hahn M."/>
            <person name="Wang R."/>
            <person name="Grabowski P."/>
            <person name="Eichenberger P."/>
            <person name="Driks A."/>
        </authorList>
    </citation>
    <scope>FUNCTION</scope>
</reference>
<proteinExistence type="predicted"/>
<protein>
    <recommendedName>
        <fullName>Spore coat protein O</fullName>
    </recommendedName>
</protein>
<dbReference type="EMBL" id="AL009126">
    <property type="protein sequence ID" value="CAB13030.1"/>
    <property type="molecule type" value="Genomic_DNA"/>
</dbReference>
<dbReference type="PIR" id="H69845">
    <property type="entry name" value="H69845"/>
</dbReference>
<dbReference type="RefSeq" id="NP_389055.1">
    <property type="nucleotide sequence ID" value="NC_000964.3"/>
</dbReference>
<dbReference type="RefSeq" id="WP_010886484.1">
    <property type="nucleotide sequence ID" value="NZ_OZ025638.1"/>
</dbReference>
<dbReference type="SMR" id="O31622"/>
<dbReference type="FunCoup" id="O31622">
    <property type="interactions" value="17"/>
</dbReference>
<dbReference type="STRING" id="224308.BSU11730"/>
<dbReference type="PaxDb" id="224308-BSU11730"/>
<dbReference type="EnsemblBacteria" id="CAB13030">
    <property type="protein sequence ID" value="CAB13030"/>
    <property type="gene ID" value="BSU_11730"/>
</dbReference>
<dbReference type="GeneID" id="939810"/>
<dbReference type="KEGG" id="bsu:BSU11730"/>
<dbReference type="eggNOG" id="ENOG503386N">
    <property type="taxonomic scope" value="Bacteria"/>
</dbReference>
<dbReference type="InParanoid" id="O31622"/>
<dbReference type="OrthoDB" id="2970540at2"/>
<dbReference type="BioCyc" id="BSUB:BSU11730-MONOMER"/>
<dbReference type="Proteomes" id="UP000001570">
    <property type="component" value="Chromosome"/>
</dbReference>
<dbReference type="GO" id="GO:0030435">
    <property type="term" value="P:sporulation resulting in formation of a cellular spore"/>
    <property type="evidence" value="ECO:0007669"/>
    <property type="project" value="UniProtKB-KW"/>
</dbReference>
<dbReference type="InterPro" id="IPR025439">
    <property type="entry name" value="Spore_coat_CotO"/>
</dbReference>
<dbReference type="Pfam" id="PF14153">
    <property type="entry name" value="Spore_coat_CotO"/>
    <property type="match status" value="1"/>
</dbReference>
<gene>
    <name type="primary">cotO</name>
    <name type="synonym">yjbX</name>
    <name type="ordered locus">BSU11730</name>
</gene>
<evidence type="ECO:0000256" key="1">
    <source>
        <dbReference type="SAM" id="MobiDB-lite"/>
    </source>
</evidence>
<evidence type="ECO:0000269" key="2">
    <source>
    </source>
</evidence>
<feature type="chain" id="PRO_0000223374" description="Spore coat protein O">
    <location>
        <begin position="1"/>
        <end position="227"/>
    </location>
</feature>
<feature type="region of interest" description="Disordered" evidence="1">
    <location>
        <begin position="1"/>
        <end position="157"/>
    </location>
</feature>
<feature type="compositionally biased region" description="Basic residues" evidence="1">
    <location>
        <begin position="1"/>
        <end position="10"/>
    </location>
</feature>
<feature type="compositionally biased region" description="Basic and acidic residues" evidence="1">
    <location>
        <begin position="35"/>
        <end position="60"/>
    </location>
</feature>
<feature type="compositionally biased region" description="Basic and acidic residues" evidence="1">
    <location>
        <begin position="85"/>
        <end position="100"/>
    </location>
</feature>
<feature type="compositionally biased region" description="Basic and acidic residues" evidence="1">
    <location>
        <begin position="108"/>
        <end position="147"/>
    </location>
</feature>
<comment type="function">
    <text evidence="2">Has an important morphogenetic role. Involved in the assembly of at least five coat proteins, including CotB, CotG, CotS, CotSA and CotW. Required for appearance of a morphologically normal outer coat. To a large degree, CotO and CotH act at a late stage of coat assembly from within the outer coat to direct maturation of this structure.</text>
</comment>
<comment type="subcellular location">
    <subcellularLocation>
        <location>Spore coat</location>
    </subcellularLocation>
    <text>Localized in the outer spore coat.</text>
</comment>
<comment type="miscellaneous">
    <text>Largely but not entirely controlled by CotE.</text>
</comment>
<accession>O31622</accession>
<sequence length="227" mass="25593">MKMSNKKRNADKKPLMYIVQPDYAETTRSSMQEIVIKRKADKPAPPKAEEKPAYHEKQQEEAVAQDVLQEDQKPAAEPVSQQTQEAREPENIKSQEEQKAEPQAVEETVEHEPPKAEKKEEPALEARKPEKEPEAVHSADKAEEKAPPARKVKKPMSKMTIHEKIDFLTKLPHNMPRALCLIEANGRTYRGVIVGRRNDSVLLRTTGNGAPTELAIDDITSLHPLGF</sequence>